<organism>
    <name type="scientific">Streptococcus suis (strain 98HAH33)</name>
    <dbReference type="NCBI Taxonomy" id="391296"/>
    <lineage>
        <taxon>Bacteria</taxon>
        <taxon>Bacillati</taxon>
        <taxon>Bacillota</taxon>
        <taxon>Bacilli</taxon>
        <taxon>Lactobacillales</taxon>
        <taxon>Streptococcaceae</taxon>
        <taxon>Streptococcus</taxon>
    </lineage>
</organism>
<sequence length="234" mass="25455">MKIHVVNNQVEGATVALDILREKLNGGTKVLGLATGSSPLEFYRLIRESDLDFSDVTSVNLDEYVGLGEESDQSYIHFMKENLFNTKPFKQSYLPNGLATDVVAETERYNKILAEHPVDFQILGIGRNGHIGFNEPGAPFDGQTHLVELAPSTIEANARFFDNPEDVPKQAISMGIANIMAAKTIVLMAYGQEKADAIKATVEGAVTEDVPASVLQNHDNVILILDQAAASKLV</sequence>
<gene>
    <name evidence="1" type="primary">nagB</name>
    <name type="ordered locus">SSU98_0634</name>
</gene>
<accession>A4W0A3</accession>
<name>NAGB_STRS2</name>
<reference key="1">
    <citation type="journal article" date="2007" name="PLoS ONE">
        <title>A glimpse of streptococcal toxic shock syndrome from comparative genomics of S. suis 2 Chinese isolates.</title>
        <authorList>
            <person name="Chen C."/>
            <person name="Tang J."/>
            <person name="Dong W."/>
            <person name="Wang C."/>
            <person name="Feng Y."/>
            <person name="Wang J."/>
            <person name="Zheng F."/>
            <person name="Pan X."/>
            <person name="Liu D."/>
            <person name="Li M."/>
            <person name="Song Y."/>
            <person name="Zhu X."/>
            <person name="Sun H."/>
            <person name="Feng T."/>
            <person name="Guo Z."/>
            <person name="Ju A."/>
            <person name="Ge J."/>
            <person name="Dong Y."/>
            <person name="Sun W."/>
            <person name="Jiang Y."/>
            <person name="Wang J."/>
            <person name="Yan J."/>
            <person name="Yang H."/>
            <person name="Wang X."/>
            <person name="Gao G.F."/>
            <person name="Yang R."/>
            <person name="Wang J."/>
            <person name="Yu J."/>
        </authorList>
    </citation>
    <scope>NUCLEOTIDE SEQUENCE [LARGE SCALE GENOMIC DNA]</scope>
    <source>
        <strain>98HAH33</strain>
    </source>
</reference>
<proteinExistence type="inferred from homology"/>
<dbReference type="EC" id="3.5.99.6" evidence="1"/>
<dbReference type="EMBL" id="CP000408">
    <property type="protein sequence ID" value="ABP91792.1"/>
    <property type="molecule type" value="Genomic_DNA"/>
</dbReference>
<dbReference type="SMR" id="A4W0A3"/>
<dbReference type="KEGG" id="ssv:SSU98_0634"/>
<dbReference type="HOGENOM" id="CLU_049611_1_0_9"/>
<dbReference type="UniPathway" id="UPA00629">
    <property type="reaction ID" value="UER00684"/>
</dbReference>
<dbReference type="GO" id="GO:0005737">
    <property type="term" value="C:cytoplasm"/>
    <property type="evidence" value="ECO:0007669"/>
    <property type="project" value="TreeGrafter"/>
</dbReference>
<dbReference type="GO" id="GO:0004342">
    <property type="term" value="F:glucosamine-6-phosphate deaminase activity"/>
    <property type="evidence" value="ECO:0007669"/>
    <property type="project" value="UniProtKB-UniRule"/>
</dbReference>
<dbReference type="GO" id="GO:0042802">
    <property type="term" value="F:identical protein binding"/>
    <property type="evidence" value="ECO:0007669"/>
    <property type="project" value="TreeGrafter"/>
</dbReference>
<dbReference type="GO" id="GO:0005975">
    <property type="term" value="P:carbohydrate metabolic process"/>
    <property type="evidence" value="ECO:0007669"/>
    <property type="project" value="InterPro"/>
</dbReference>
<dbReference type="GO" id="GO:0006043">
    <property type="term" value="P:glucosamine catabolic process"/>
    <property type="evidence" value="ECO:0007669"/>
    <property type="project" value="TreeGrafter"/>
</dbReference>
<dbReference type="GO" id="GO:0006046">
    <property type="term" value="P:N-acetylglucosamine catabolic process"/>
    <property type="evidence" value="ECO:0007669"/>
    <property type="project" value="TreeGrafter"/>
</dbReference>
<dbReference type="GO" id="GO:0019262">
    <property type="term" value="P:N-acetylneuraminate catabolic process"/>
    <property type="evidence" value="ECO:0007669"/>
    <property type="project" value="UniProtKB-UniRule"/>
</dbReference>
<dbReference type="CDD" id="cd01399">
    <property type="entry name" value="GlcN6P_deaminase"/>
    <property type="match status" value="1"/>
</dbReference>
<dbReference type="FunFam" id="3.40.50.1360:FF:000003">
    <property type="entry name" value="Glucosamine-6-phosphate deaminase"/>
    <property type="match status" value="1"/>
</dbReference>
<dbReference type="Gene3D" id="3.40.50.1360">
    <property type="match status" value="1"/>
</dbReference>
<dbReference type="HAMAP" id="MF_01241">
    <property type="entry name" value="GlcN6P_deamin"/>
    <property type="match status" value="1"/>
</dbReference>
<dbReference type="InterPro" id="IPR006148">
    <property type="entry name" value="Glc/Gal-6P_isomerase"/>
</dbReference>
<dbReference type="InterPro" id="IPR004547">
    <property type="entry name" value="Glucosamine6P_isomerase"/>
</dbReference>
<dbReference type="InterPro" id="IPR018321">
    <property type="entry name" value="Glucosamine6P_isomerase_CS"/>
</dbReference>
<dbReference type="InterPro" id="IPR037171">
    <property type="entry name" value="NagB/RpiA_transferase-like"/>
</dbReference>
<dbReference type="PANTHER" id="PTHR11280">
    <property type="entry name" value="GLUCOSAMINE-6-PHOSPHATE ISOMERASE"/>
    <property type="match status" value="1"/>
</dbReference>
<dbReference type="PANTHER" id="PTHR11280:SF5">
    <property type="entry name" value="GLUCOSAMINE-6-PHOSPHATE ISOMERASE"/>
    <property type="match status" value="1"/>
</dbReference>
<dbReference type="Pfam" id="PF01182">
    <property type="entry name" value="Glucosamine_iso"/>
    <property type="match status" value="1"/>
</dbReference>
<dbReference type="SUPFAM" id="SSF100950">
    <property type="entry name" value="NagB/RpiA/CoA transferase-like"/>
    <property type="match status" value="1"/>
</dbReference>
<dbReference type="PROSITE" id="PS01161">
    <property type="entry name" value="GLC_GALNAC_ISOMERASE"/>
    <property type="match status" value="1"/>
</dbReference>
<evidence type="ECO:0000255" key="1">
    <source>
        <dbReference type="HAMAP-Rule" id="MF_01241"/>
    </source>
</evidence>
<comment type="function">
    <text evidence="1">Catalyzes the reversible isomerization-deamination of glucosamine 6-phosphate (GlcN6P) to form fructose 6-phosphate (Fru6P) and ammonium ion.</text>
</comment>
<comment type="catalytic activity">
    <reaction evidence="1">
        <text>alpha-D-glucosamine 6-phosphate + H2O = beta-D-fructose 6-phosphate + NH4(+)</text>
        <dbReference type="Rhea" id="RHEA:12172"/>
        <dbReference type="ChEBI" id="CHEBI:15377"/>
        <dbReference type="ChEBI" id="CHEBI:28938"/>
        <dbReference type="ChEBI" id="CHEBI:57634"/>
        <dbReference type="ChEBI" id="CHEBI:75989"/>
        <dbReference type="EC" id="3.5.99.6"/>
    </reaction>
</comment>
<comment type="pathway">
    <text evidence="1">Amino-sugar metabolism; N-acetylneuraminate degradation; D-fructose 6-phosphate from N-acetylneuraminate: step 5/5.</text>
</comment>
<comment type="similarity">
    <text evidence="1">Belongs to the glucosamine/galactosamine-6-phosphate isomerase family. NagB subfamily.</text>
</comment>
<feature type="chain" id="PRO_1000067029" description="Glucosamine-6-phosphate deaminase">
    <location>
        <begin position="1"/>
        <end position="234"/>
    </location>
</feature>
<feature type="active site" description="Proton acceptor; for enolization step" evidence="1">
    <location>
        <position position="62"/>
    </location>
</feature>
<feature type="active site" description="For ring-opening step" evidence="1">
    <location>
        <position position="128"/>
    </location>
</feature>
<feature type="active site" description="Proton acceptor; for ring-opening step" evidence="1">
    <location>
        <position position="130"/>
    </location>
</feature>
<feature type="active site" description="For ring-opening step" evidence="1">
    <location>
        <position position="135"/>
    </location>
</feature>
<protein>
    <recommendedName>
        <fullName evidence="1">Glucosamine-6-phosphate deaminase</fullName>
        <ecNumber evidence="1">3.5.99.6</ecNumber>
    </recommendedName>
    <alternativeName>
        <fullName evidence="1">GlcN6P deaminase</fullName>
        <shortName evidence="1">GNPDA</shortName>
    </alternativeName>
    <alternativeName>
        <fullName evidence="1">Glucosamine-6-phosphate isomerase</fullName>
    </alternativeName>
</protein>
<keyword id="KW-0119">Carbohydrate metabolism</keyword>
<keyword id="KW-0378">Hydrolase</keyword>